<feature type="chain" id="PRO_0000134504" description="Probable deoxyhypusine synthase">
    <location>
        <begin position="1"/>
        <end position="336"/>
    </location>
</feature>
<feature type="active site" description="Nucleophile" evidence="1">
    <location>
        <position position="308"/>
    </location>
</feature>
<evidence type="ECO:0000255" key="1">
    <source>
        <dbReference type="HAMAP-Rule" id="MF_00153"/>
    </source>
</evidence>
<evidence type="ECO:0000305" key="2"/>
<accession>Q8U407</accession>
<sequence length="336" mass="38429">MPKPKEYVLKKSEEIEGTKVEGPWLDDTKSLEEVVSLYTQIGFQATHLGKAIEIWRKIEEKREKGEEIRVFLGYTSNIVSSGLREIIAWLVKHRKVDVIVTTAGGVEEDFIKALKPFILGDWIVNDAELRKKGINRIGNIFVPNDRYIEFEKYMIPFFERILEIEREKGRPLTASEFIYELGRFMDEKLGKEKEKSIIYWAYRNEIPIFCPAITDGSIGDMLYFFKEERRDRELIIDIANDIVKLNNLAVTAKETASIILGGSLPKHAIINANLFRGGSDYAIYITTAVPWDGSLSGAPPSEGVSWGKIRAKADYVEIWADATLVFPILVWMVMKR</sequence>
<keyword id="KW-0386">Hypusine biosynthesis</keyword>
<keyword id="KW-0520">NAD</keyword>
<keyword id="KW-1185">Reference proteome</keyword>
<keyword id="KW-0808">Transferase</keyword>
<organism>
    <name type="scientific">Pyrococcus furiosus (strain ATCC 43587 / DSM 3638 / JCM 8422 / Vc1)</name>
    <dbReference type="NCBI Taxonomy" id="186497"/>
    <lineage>
        <taxon>Archaea</taxon>
        <taxon>Methanobacteriati</taxon>
        <taxon>Methanobacteriota</taxon>
        <taxon>Thermococci</taxon>
        <taxon>Thermococcales</taxon>
        <taxon>Thermococcaceae</taxon>
        <taxon>Pyrococcus</taxon>
    </lineage>
</organism>
<dbReference type="EC" id="2.5.1.46" evidence="1"/>
<dbReference type="EMBL" id="AE009950">
    <property type="protein sequence ID" value="AAL80416.1"/>
    <property type="status" value="ALT_INIT"/>
    <property type="molecule type" value="Genomic_DNA"/>
</dbReference>
<dbReference type="RefSeq" id="WP_014835103.1">
    <property type="nucleotide sequence ID" value="NZ_CP023154.1"/>
</dbReference>
<dbReference type="SMR" id="Q8U407"/>
<dbReference type="STRING" id="186497.PF0292"/>
<dbReference type="PaxDb" id="186497-PF0292"/>
<dbReference type="KEGG" id="pfu:PF0292"/>
<dbReference type="PATRIC" id="fig|186497.12.peg.304"/>
<dbReference type="eggNOG" id="arCOG04142">
    <property type="taxonomic scope" value="Archaea"/>
</dbReference>
<dbReference type="HOGENOM" id="CLU_039781_0_0_2"/>
<dbReference type="OrthoDB" id="17730at2157"/>
<dbReference type="PhylomeDB" id="Q8U407"/>
<dbReference type="UniPathway" id="UPA00354"/>
<dbReference type="Proteomes" id="UP000001013">
    <property type="component" value="Chromosome"/>
</dbReference>
<dbReference type="GO" id="GO:0005737">
    <property type="term" value="C:cytoplasm"/>
    <property type="evidence" value="ECO:0007669"/>
    <property type="project" value="TreeGrafter"/>
</dbReference>
<dbReference type="GO" id="GO:0034038">
    <property type="term" value="F:deoxyhypusine synthase activity"/>
    <property type="evidence" value="ECO:0007669"/>
    <property type="project" value="UniProtKB-UniRule"/>
</dbReference>
<dbReference type="FunFam" id="3.40.910.10:FF:000004">
    <property type="entry name" value="Probable deoxyhypusine synthase"/>
    <property type="match status" value="1"/>
</dbReference>
<dbReference type="Gene3D" id="3.40.910.10">
    <property type="entry name" value="Deoxyhypusine synthase"/>
    <property type="match status" value="1"/>
</dbReference>
<dbReference type="HAMAP" id="MF_00153">
    <property type="entry name" value="DHS"/>
    <property type="match status" value="1"/>
</dbReference>
<dbReference type="InterPro" id="IPR022899">
    <property type="entry name" value="Deoxyhypus_synthase_arc"/>
</dbReference>
<dbReference type="InterPro" id="IPR002773">
    <property type="entry name" value="Deoxyhypusine_synthase"/>
</dbReference>
<dbReference type="InterPro" id="IPR036982">
    <property type="entry name" value="Deoxyhypusine_synthase_sf"/>
</dbReference>
<dbReference type="InterPro" id="IPR029035">
    <property type="entry name" value="DHS-like_NAD/FAD-binding_dom"/>
</dbReference>
<dbReference type="NCBIfam" id="TIGR00321">
    <property type="entry name" value="dhys"/>
    <property type="match status" value="1"/>
</dbReference>
<dbReference type="NCBIfam" id="NF003052">
    <property type="entry name" value="PRK03971.1"/>
    <property type="match status" value="1"/>
</dbReference>
<dbReference type="PANTHER" id="PTHR11703">
    <property type="entry name" value="DEOXYHYPUSINE SYNTHASE"/>
    <property type="match status" value="1"/>
</dbReference>
<dbReference type="PANTHER" id="PTHR11703:SF0">
    <property type="entry name" value="DEOXYHYPUSINE SYNTHASE"/>
    <property type="match status" value="1"/>
</dbReference>
<dbReference type="Pfam" id="PF01916">
    <property type="entry name" value="DS"/>
    <property type="match status" value="1"/>
</dbReference>
<dbReference type="SUPFAM" id="SSF52467">
    <property type="entry name" value="DHS-like NAD/FAD-binding domain"/>
    <property type="match status" value="1"/>
</dbReference>
<gene>
    <name evidence="1" type="primary">dys</name>
    <name type="ordered locus">PF0292</name>
</gene>
<reference key="1">
    <citation type="journal article" date="1999" name="Genetics">
        <title>Divergence of the hyperthermophilic archaea Pyrococcus furiosus and P. horikoshii inferred from complete genomic sequences.</title>
        <authorList>
            <person name="Maeder D.L."/>
            <person name="Weiss R.B."/>
            <person name="Dunn D.M."/>
            <person name="Cherry J.L."/>
            <person name="Gonzalez J.M."/>
            <person name="DiRuggiero J."/>
            <person name="Robb F.T."/>
        </authorList>
    </citation>
    <scope>NUCLEOTIDE SEQUENCE [LARGE SCALE GENOMIC DNA]</scope>
    <source>
        <strain>ATCC 43587 / DSM 3638 / JCM 8422 / Vc1</strain>
    </source>
</reference>
<protein>
    <recommendedName>
        <fullName evidence="1">Probable deoxyhypusine synthase</fullName>
        <shortName evidence="1">DHS</shortName>
        <ecNumber evidence="1">2.5.1.46</ecNumber>
    </recommendedName>
</protein>
<name>DHYS_PYRFU</name>
<comment type="function">
    <text evidence="1">Catalyzes the NAD-dependent oxidative cleavage of spermidine and the subsequent transfer of the butylamine moiety of spermidine to the epsilon-amino group of a specific lysine residue of the eIF-5A precursor protein to form the intermediate deoxyhypusine residue.</text>
</comment>
<comment type="catalytic activity">
    <reaction evidence="1">
        <text>[eIF5A protein]-L-lysine + spermidine = [eIF5A protein]-deoxyhypusine + propane-1,3-diamine</text>
        <dbReference type="Rhea" id="RHEA:33299"/>
        <dbReference type="Rhea" id="RHEA-COMP:10143"/>
        <dbReference type="Rhea" id="RHEA-COMP:10144"/>
        <dbReference type="ChEBI" id="CHEBI:29969"/>
        <dbReference type="ChEBI" id="CHEBI:57484"/>
        <dbReference type="ChEBI" id="CHEBI:57834"/>
        <dbReference type="ChEBI" id="CHEBI:82657"/>
        <dbReference type="EC" id="2.5.1.46"/>
    </reaction>
</comment>
<comment type="cofactor">
    <cofactor evidence="1">
        <name>NAD(+)</name>
        <dbReference type="ChEBI" id="CHEBI:57540"/>
    </cofactor>
</comment>
<comment type="pathway">
    <text evidence="1">Protein modification; eIF5A hypusination.</text>
</comment>
<comment type="similarity">
    <text evidence="1">Belongs to the deoxyhypusine synthase family.</text>
</comment>
<comment type="sequence caution" evidence="2">
    <conflict type="erroneous initiation">
        <sequence resource="EMBL-CDS" id="AAL80416"/>
    </conflict>
</comment>
<proteinExistence type="inferred from homology"/>